<organism>
    <name type="scientific">Salmo salar</name>
    <name type="common">Atlantic salmon</name>
    <dbReference type="NCBI Taxonomy" id="8030"/>
    <lineage>
        <taxon>Eukaryota</taxon>
        <taxon>Metazoa</taxon>
        <taxon>Chordata</taxon>
        <taxon>Craniata</taxon>
        <taxon>Vertebrata</taxon>
        <taxon>Euteleostomi</taxon>
        <taxon>Actinopterygii</taxon>
        <taxon>Neopterygii</taxon>
        <taxon>Teleostei</taxon>
        <taxon>Protacanthopterygii</taxon>
        <taxon>Salmoniformes</taxon>
        <taxon>Salmonidae</taxon>
        <taxon>Salmoninae</taxon>
        <taxon>Salmo</taxon>
    </lineage>
</organism>
<comment type="function">
    <text evidence="1">Probable GTPase that plays a role in the mitochondrial ribosomal small subunit assembly. Specifically binds the 12S mitochondrial rRNA (12S mt-rRNA) to a 33 nucleotide section delineating the 3' terminal stem-loop region. May act as a chaperone that protects the 12S mt-rRNA on the 28S mitoribosomal subunit during ribosomal small subunit assembly (By similarity).</text>
</comment>
<comment type="subcellular location">
    <subcellularLocation>
        <location evidence="1">Mitochondrion matrix</location>
    </subcellularLocation>
    <subcellularLocation>
        <location evidence="1">Mitochondrion inner membrane</location>
        <topology evidence="1">Peripheral membrane protein</topology>
    </subcellularLocation>
    <text evidence="1">Localizes on the matrix side on the mitochondrial inner membrane.</text>
</comment>
<comment type="similarity">
    <text evidence="4 6">Belongs to the TRAFAC class TrmE-Era-EngA-EngB-Septin-like GTPase superfamily. Era GTPase family.</text>
</comment>
<proteinExistence type="evidence at transcript level"/>
<feature type="transit peptide" description="Mitochondrion" evidence="3">
    <location>
        <begin position="1"/>
        <end position="18"/>
    </location>
</feature>
<feature type="chain" id="PRO_0000404549" description="GTPase Era, mitochondrial">
    <location>
        <begin position="19"/>
        <end position="457"/>
    </location>
</feature>
<feature type="domain" description="Era-type G" evidence="4">
    <location>
        <begin position="107"/>
        <end position="350"/>
    </location>
</feature>
<feature type="domain" description="KH type-2">
    <location>
        <begin position="376"/>
        <end position="457"/>
    </location>
</feature>
<feature type="region of interest" description="G1" evidence="4">
    <location>
        <begin position="115"/>
        <end position="122"/>
    </location>
</feature>
<feature type="region of interest" description="G2" evidence="4">
    <location>
        <begin position="141"/>
        <end position="145"/>
    </location>
</feature>
<feature type="region of interest" description="G3" evidence="4">
    <location>
        <begin position="162"/>
        <end position="165"/>
    </location>
</feature>
<feature type="region of interest" description="G4" evidence="4">
    <location>
        <begin position="231"/>
        <end position="234"/>
    </location>
</feature>
<feature type="region of interest" description="Disordered" evidence="5">
    <location>
        <begin position="270"/>
        <end position="300"/>
    </location>
</feature>
<feature type="region of interest" description="G5" evidence="4">
    <location>
        <begin position="328"/>
        <end position="330"/>
    </location>
</feature>
<feature type="compositionally biased region" description="Basic and acidic residues" evidence="5">
    <location>
        <begin position="270"/>
        <end position="290"/>
    </location>
</feature>
<feature type="binding site" evidence="2">
    <location>
        <begin position="115"/>
        <end position="122"/>
    </location>
    <ligand>
        <name>GTP</name>
        <dbReference type="ChEBI" id="CHEBI:37565"/>
    </ligand>
</feature>
<feature type="binding site" evidence="2">
    <location>
        <begin position="162"/>
        <end position="166"/>
    </location>
    <ligand>
        <name>GTP</name>
        <dbReference type="ChEBI" id="CHEBI:37565"/>
    </ligand>
</feature>
<feature type="binding site" evidence="2">
    <location>
        <begin position="231"/>
        <end position="234"/>
    </location>
    <ligand>
        <name>GTP</name>
        <dbReference type="ChEBI" id="CHEBI:37565"/>
    </ligand>
</feature>
<reference key="1">
    <citation type="journal article" date="2010" name="BMC Genomics">
        <title>Salmo salar and Esox lucius full-length cDNA sequences reveal changes in evolutionary pressures on a post-tetraploidization genome.</title>
        <authorList>
            <person name="Leong J.S."/>
            <person name="Jantzen S.G."/>
            <person name="von Schalburg K.R."/>
            <person name="Cooper G.A."/>
            <person name="Messmer A.M."/>
            <person name="Liao N.Y."/>
            <person name="Munro S."/>
            <person name="Moore R."/>
            <person name="Holt R.A."/>
            <person name="Jones S.J."/>
            <person name="Davidson W.S."/>
            <person name="Koop B.F."/>
        </authorList>
    </citation>
    <scope>NUCLEOTIDE SEQUENCE [LARGE SCALE MRNA]</scope>
    <source>
        <tissue>Brain</tissue>
    </source>
</reference>
<name>ERAL1_SALSA</name>
<sequence length="457" mass="50510">MAFRVSISTFGKSLRVRRVANVSAPLANASPFLRTGWAARPPGTNNGHGFRFTPACFITSDAFLSRLAKGKAETDDTHYHHPASVLPDSAEQLSLLVKDPDQPENSKVLRVAIIGAPNAGKSTLSNQLLGRKVFAVSKKVHTTRARALGVLTEDDTQIILLDTPGLTTPTKVKRHQLEKSLLEDPWNTVKEAGLVVVMVDVSDKWACNKLDFEVLKCLTQHPDVPAVLVLNKVDLLKSKSRLLEITADLTCGVVNGRKLQVRRVIKPPWAERRTDREARTSGSGDEEKPGGDVADGEGSEALSGLSKEQLRALKTQQGWAHFKDVFMVSAVDGEDVETLKRYLVVGAKPGSWQYHSDVLTDQTPEEICTNTVREKLLEYLPKEVPYTMTQAIDLWHDRENGELDIAVKLYVKKESHMKMVIGQAGQMVARIAREAGDDLSTVFLREVKLRLSVKVKN</sequence>
<evidence type="ECO:0000250" key="1"/>
<evidence type="ECO:0000250" key="2">
    <source>
        <dbReference type="UniProtKB" id="P06616"/>
    </source>
</evidence>
<evidence type="ECO:0000255" key="3"/>
<evidence type="ECO:0000255" key="4">
    <source>
        <dbReference type="PROSITE-ProRule" id="PRU01050"/>
    </source>
</evidence>
<evidence type="ECO:0000256" key="5">
    <source>
        <dbReference type="SAM" id="MobiDB-lite"/>
    </source>
</evidence>
<evidence type="ECO:0000305" key="6"/>
<keyword id="KW-0342">GTP-binding</keyword>
<keyword id="KW-0472">Membrane</keyword>
<keyword id="KW-0496">Mitochondrion</keyword>
<keyword id="KW-0999">Mitochondrion inner membrane</keyword>
<keyword id="KW-0547">Nucleotide-binding</keyword>
<keyword id="KW-1185">Reference proteome</keyword>
<keyword id="KW-0690">Ribosome biogenesis</keyword>
<keyword id="KW-0694">RNA-binding</keyword>
<keyword id="KW-0699">rRNA-binding</keyword>
<keyword id="KW-0809">Transit peptide</keyword>
<dbReference type="EMBL" id="BT045187">
    <property type="protein sequence ID" value="ACI33449.1"/>
    <property type="molecule type" value="mRNA"/>
</dbReference>
<dbReference type="EMBL" id="BT059676">
    <property type="protein sequence ID" value="ACN11389.1"/>
    <property type="molecule type" value="mRNA"/>
</dbReference>
<dbReference type="RefSeq" id="NP_001133545.1">
    <property type="nucleotide sequence ID" value="NM_001140073.1"/>
</dbReference>
<dbReference type="SMR" id="B5X2B8"/>
<dbReference type="STRING" id="8030.ENSSSAP00000071032"/>
<dbReference type="PaxDb" id="8030-ENSSSAP00000071032"/>
<dbReference type="Ensembl" id="ENSSSAT00020174459">
    <property type="protein sequence ID" value="ENSSSAP00020132924"/>
    <property type="gene ID" value="ENSSSAG00020073806"/>
</dbReference>
<dbReference type="Ensembl" id="ENSSSAT00070050619">
    <property type="protein sequence ID" value="ENSSSAP00070048550"/>
    <property type="gene ID" value="ENSSSAG00070031586"/>
</dbReference>
<dbReference type="Ensembl" id="ENSSSAT00075057223">
    <property type="protein sequence ID" value="ENSSSAP00075040280"/>
    <property type="gene ID" value="ENSSSAG00075027380"/>
</dbReference>
<dbReference type="GeneID" id="100195044"/>
<dbReference type="KEGG" id="sasa:100195044"/>
<dbReference type="CTD" id="26284"/>
<dbReference type="OrthoDB" id="373483at7898"/>
<dbReference type="Proteomes" id="UP000087266">
    <property type="component" value="Chromosome ssa13"/>
</dbReference>
<dbReference type="Bgee" id="ENSSSAG00000063416">
    <property type="expression patterns" value="Expressed in notochord and 24 other cell types or tissues"/>
</dbReference>
<dbReference type="GO" id="GO:0005743">
    <property type="term" value="C:mitochondrial inner membrane"/>
    <property type="evidence" value="ECO:0007669"/>
    <property type="project" value="UniProtKB-SubCell"/>
</dbReference>
<dbReference type="GO" id="GO:0005759">
    <property type="term" value="C:mitochondrial matrix"/>
    <property type="evidence" value="ECO:0000250"/>
    <property type="project" value="UniProtKB"/>
</dbReference>
<dbReference type="GO" id="GO:0005525">
    <property type="term" value="F:GTP binding"/>
    <property type="evidence" value="ECO:0007669"/>
    <property type="project" value="UniProtKB-KW"/>
</dbReference>
<dbReference type="GO" id="GO:0043024">
    <property type="term" value="F:ribosomal small subunit binding"/>
    <property type="evidence" value="ECO:0000250"/>
    <property type="project" value="UniProtKB"/>
</dbReference>
<dbReference type="GO" id="GO:0019843">
    <property type="term" value="F:rRNA binding"/>
    <property type="evidence" value="ECO:0000250"/>
    <property type="project" value="UniProtKB"/>
</dbReference>
<dbReference type="GO" id="GO:0000028">
    <property type="term" value="P:ribosomal small subunit assembly"/>
    <property type="evidence" value="ECO:0000250"/>
    <property type="project" value="UniProtKB"/>
</dbReference>
<dbReference type="CDD" id="cd04163">
    <property type="entry name" value="Era"/>
    <property type="match status" value="1"/>
</dbReference>
<dbReference type="CDD" id="cd22534">
    <property type="entry name" value="KH-II_Era"/>
    <property type="match status" value="1"/>
</dbReference>
<dbReference type="FunFam" id="3.30.300.20:FF:000016">
    <property type="entry name" value="GTPase Era, mitochondrial isoform 1"/>
    <property type="match status" value="1"/>
</dbReference>
<dbReference type="Gene3D" id="3.30.300.20">
    <property type="match status" value="1"/>
</dbReference>
<dbReference type="Gene3D" id="3.40.50.300">
    <property type="entry name" value="P-loop containing nucleotide triphosphate hydrolases"/>
    <property type="match status" value="1"/>
</dbReference>
<dbReference type="HAMAP" id="MF_00367">
    <property type="entry name" value="GTPase_Era"/>
    <property type="match status" value="1"/>
</dbReference>
<dbReference type="InterPro" id="IPR030388">
    <property type="entry name" value="G_ERA_dom"/>
</dbReference>
<dbReference type="InterPro" id="IPR006073">
    <property type="entry name" value="GTP-bd"/>
</dbReference>
<dbReference type="InterPro" id="IPR005662">
    <property type="entry name" value="GTPase_Era-like"/>
</dbReference>
<dbReference type="InterPro" id="IPR015946">
    <property type="entry name" value="KH_dom-like_a/b"/>
</dbReference>
<dbReference type="InterPro" id="IPR004044">
    <property type="entry name" value="KH_dom_type_2"/>
</dbReference>
<dbReference type="InterPro" id="IPR009019">
    <property type="entry name" value="KH_sf_prok-type"/>
</dbReference>
<dbReference type="InterPro" id="IPR027417">
    <property type="entry name" value="P-loop_NTPase"/>
</dbReference>
<dbReference type="InterPro" id="IPR005225">
    <property type="entry name" value="Small_GTP-bd"/>
</dbReference>
<dbReference type="NCBIfam" id="TIGR00231">
    <property type="entry name" value="small_GTP"/>
    <property type="match status" value="1"/>
</dbReference>
<dbReference type="PANTHER" id="PTHR42698">
    <property type="entry name" value="GTPASE ERA"/>
    <property type="match status" value="1"/>
</dbReference>
<dbReference type="PANTHER" id="PTHR42698:SF1">
    <property type="entry name" value="GTPASE ERA, MITOCHONDRIAL"/>
    <property type="match status" value="1"/>
</dbReference>
<dbReference type="Pfam" id="PF07650">
    <property type="entry name" value="KH_2"/>
    <property type="match status" value="1"/>
</dbReference>
<dbReference type="Pfam" id="PF01926">
    <property type="entry name" value="MMR_HSR1"/>
    <property type="match status" value="1"/>
</dbReference>
<dbReference type="SUPFAM" id="SSF52540">
    <property type="entry name" value="P-loop containing nucleoside triphosphate hydrolases"/>
    <property type="match status" value="1"/>
</dbReference>
<dbReference type="SUPFAM" id="SSF54814">
    <property type="entry name" value="Prokaryotic type KH domain (KH-domain type II)"/>
    <property type="match status" value="1"/>
</dbReference>
<dbReference type="PROSITE" id="PS51713">
    <property type="entry name" value="G_ERA"/>
    <property type="match status" value="1"/>
</dbReference>
<dbReference type="PROSITE" id="PS50823">
    <property type="entry name" value="KH_TYPE_2"/>
    <property type="match status" value="1"/>
</dbReference>
<gene>
    <name type="primary">eral1</name>
</gene>
<accession>B5X2B8</accession>
<protein>
    <recommendedName>
        <fullName>GTPase Era, mitochondrial</fullName>
    </recommendedName>
    <alternativeName>
        <fullName>ERA-like protein 1</fullName>
    </alternativeName>
</protein>